<sequence>FLPLILRKIVTAL</sequence>
<feature type="peptide" id="PRO_0000044045" description="Crabrolin" evidence="6">
    <location>
        <begin position="1"/>
        <end position="13"/>
    </location>
</feature>
<feature type="modified residue" description="Leucine amide" evidence="6">
    <location>
        <position position="13"/>
    </location>
</feature>
<feature type="mutagenesis site" description="In crabrolin-plus; increase in antimicrobial activity and gain of ability to interact with LPS; when associated with R-11. In C-terminally amidated crabrolin21; huge increase in antimicrobial activity, increase in hemolytic activity, and gain of ability to interact with LPS; when associated with R-11 and L-13." evidence="3 4 5">
    <original>L</original>
    <variation>K</variation>
    <location>
        <position position="4"/>
    </location>
</feature>
<feature type="mutagenesis site" description="In crabrolin-minus; decrease in antimicrobial activity; when associated with W-8." evidence="3 4">
    <original>R</original>
    <variation>F</variation>
    <location>
        <position position="7"/>
    </location>
</feature>
<feature type="mutagenesis site" description="In crabrolin-minus; decrease in antimicrobial activity; when associated with F-7." evidence="3 4">
    <original>K</original>
    <variation>W</variation>
    <location>
        <position position="8"/>
    </location>
</feature>
<feature type="mutagenesis site" description="In crabrolin-plus; increase in antimicrobial activity and gain of ability to interact with LPS; when associated with K-4. In C-terminally amidated crabrolin21; huge increase in antimicrobial activity, increase in hemolytic activity, and gain of ability to interact with LPS; when associated with K-4 and L-13." evidence="3 4 5">
    <original>T</original>
    <variation>R</variation>
    <location>
        <position position="11"/>
    </location>
</feature>
<feature type="mutagenesis site" description="In C-terminally amidated crabrolin21; huge increase in antimicrobial activity, increase in hemolytic activity, and gain of ability to interact with LPS; when associated with K-4 and R-11." evidence="5">
    <original>L</original>
    <variation>LAKVGIKVA</variation>
    <location>
        <position position="13"/>
    </location>
</feature>
<feature type="helix" evidence="13">
    <location>
        <begin position="3"/>
        <end position="12"/>
    </location>
</feature>
<accession>P01518</accession>
<reference key="1">
    <citation type="journal article" date="1984" name="J. Biol. Chem.">
        <title>Isolation and characterization of two new peptides, mastoparan C and crabrolin, from the venom of the European hornet, Vespa crabro.</title>
        <authorList>
            <person name="Argiolas A."/>
            <person name="Pisano J.J."/>
        </authorList>
    </citation>
    <scope>PROTEIN SEQUENCE</scope>
    <scope>FUNCTION</scope>
    <scope>AMIDATION AT LEU-13</scope>
    <scope>SUBCELLULAR LOCATION</scope>
    <source>
        <tissue>Venom</tissue>
    </source>
</reference>
<reference key="2">
    <citation type="journal article" date="1997" name="J. Pept. Res.">
        <title>Antimicrobial and hemolytic activities of crabrolin, a 13-residue peptide from the venom of the European hornet, Vespa crabro, and its analogs.</title>
        <authorList>
            <person name="Krishnakumari V."/>
            <person name="Nagaraj R."/>
        </authorList>
    </citation>
    <scope>FUNCTION</scope>
    <scope>SYNTHESIS</scope>
</reference>
<reference key="3">
    <citation type="journal article" date="2023" name="Membranes">
        <title>Structural and Functional Characterization of the Newly Designed Antimicrobial Peptide Crabrolin21.</title>
        <authorList>
            <person name="Cantini F."/>
            <person name="Gianni P."/>
            <person name="Bobone S."/>
            <person name="Troiano C."/>
            <person name="van Ingen H."/>
            <person name="Massoud R."/>
            <person name="Perini N."/>
            <person name="Migliore L."/>
            <person name="Savarin P."/>
            <person name="Sanders C."/>
            <person name="Stella L."/>
            <person name="Sette M."/>
        </authorList>
    </citation>
    <scope>MUTAGENESIS OF LEU-4; THR-11 AND LEU-13</scope>
</reference>
<reference key="4">
    <citation type="journal article" date="2020" name="Biochim. Biophys. Acta">
        <title>Structural characterization and biological activity of Crabrolin peptide isoforms with different positive charge.</title>
        <authorList>
            <person name="Aschi M."/>
            <person name="Perini N."/>
            <person name="Bouchemal N."/>
            <person name="Luzi C."/>
            <person name="Savarin P."/>
            <person name="Migliore L."/>
            <person name="Bozzi A."/>
            <person name="Sette M."/>
        </authorList>
    </citation>
    <scope>STRUCTURE BY NMR OF CRABROLIN-PLUS AND CRABROLIN-MINUS ANALOGS</scope>
    <scope>FUNCTION</scope>
    <scope>MUTAGENESIS OF LEU-4; ARG-7; LYS-8 AND THR-11</scope>
    <scope>SYNTHESIS</scope>
    <scope>SUBCELLULAR LOCATION</scope>
</reference>
<reference evidence="12" key="5">
    <citation type="journal article" date="2020" name="J. Pept. Sci.">
        <title>Effect of positive charges in the structural interaction of crabrolin isoforms with lipopolysaccharide.</title>
        <authorList>
            <person name="Cantini F."/>
            <person name="Luzi C."/>
            <person name="Bouchemal N."/>
            <person name="Savarin P."/>
            <person name="Bozzi A."/>
            <person name="Sette M."/>
        </authorList>
    </citation>
    <scope>STRUCTURE BY NMR OF CRABROLIN-PLUS ANALOG</scope>
    <scope>SYNTHESIS</scope>
    <scope>MUTAGENESIS OF LEU-4; ARG-7; LYS-8 AND THR-11</scope>
</reference>
<proteinExistence type="evidence at protein level"/>
<dbReference type="PIR" id="A01781">
    <property type="entry name" value="JZVHP1"/>
</dbReference>
<dbReference type="PDB" id="6TWG">
    <property type="method" value="NMR"/>
    <property type="chains" value="A=1-13"/>
</dbReference>
<dbReference type="PDBsum" id="6TWG"/>
<dbReference type="SMR" id="P01518"/>
<dbReference type="TCDB" id="1.C.32.3.1">
    <property type="family name" value="the amphipathic peptide mastoparan (mastoparan) family"/>
</dbReference>
<dbReference type="GO" id="GO:0005576">
    <property type="term" value="C:extracellular region"/>
    <property type="evidence" value="ECO:0007669"/>
    <property type="project" value="UniProtKB-SubCell"/>
</dbReference>
<dbReference type="GO" id="GO:0016020">
    <property type="term" value="C:membrane"/>
    <property type="evidence" value="ECO:0007669"/>
    <property type="project" value="UniProtKB-KW"/>
</dbReference>
<dbReference type="GO" id="GO:0044218">
    <property type="term" value="C:other organism cell membrane"/>
    <property type="evidence" value="ECO:0007669"/>
    <property type="project" value="UniProtKB-KW"/>
</dbReference>
<dbReference type="GO" id="GO:0090729">
    <property type="term" value="F:toxin activity"/>
    <property type="evidence" value="ECO:0007669"/>
    <property type="project" value="UniProtKB-KW"/>
</dbReference>
<dbReference type="GO" id="GO:0006935">
    <property type="term" value="P:chemotaxis"/>
    <property type="evidence" value="ECO:0007669"/>
    <property type="project" value="UniProtKB-KW"/>
</dbReference>
<dbReference type="GO" id="GO:0042742">
    <property type="term" value="P:defense response to bacterium"/>
    <property type="evidence" value="ECO:0007669"/>
    <property type="project" value="UniProtKB-KW"/>
</dbReference>
<dbReference type="GO" id="GO:0045087">
    <property type="term" value="P:innate immune response"/>
    <property type="evidence" value="ECO:0007669"/>
    <property type="project" value="UniProtKB-KW"/>
</dbReference>
<evidence type="ECO:0000250" key="1">
    <source>
        <dbReference type="UniProtKB" id="P01514"/>
    </source>
</evidence>
<evidence type="ECO:0000250" key="2">
    <source>
        <dbReference type="UniProtKB" id="P84914"/>
    </source>
</evidence>
<evidence type="ECO:0000269" key="3">
    <source>
    </source>
</evidence>
<evidence type="ECO:0000269" key="4">
    <source>
    </source>
</evidence>
<evidence type="ECO:0000269" key="5">
    <source>
    </source>
</evidence>
<evidence type="ECO:0000269" key="6">
    <source>
    </source>
</evidence>
<evidence type="ECO:0000269" key="7">
    <source>
    </source>
</evidence>
<evidence type="ECO:0000303" key="8">
    <source>
    </source>
</evidence>
<evidence type="ECO:0000305" key="9"/>
<evidence type="ECO:0000305" key="10">
    <source>
    </source>
</evidence>
<evidence type="ECO:0000305" key="11">
    <source>
    </source>
</evidence>
<evidence type="ECO:0000312" key="12">
    <source>
        <dbReference type="PDB" id="6TWG"/>
    </source>
</evidence>
<evidence type="ECO:0007829" key="13">
    <source>
        <dbReference type="PDB" id="6TWG"/>
    </source>
</evidence>
<keyword id="KW-0002">3D-structure</keyword>
<keyword id="KW-0027">Amidation</keyword>
<keyword id="KW-0044">Antibiotic</keyword>
<keyword id="KW-0929">Antimicrobial</keyword>
<keyword id="KW-0145">Chemotaxis</keyword>
<keyword id="KW-0903">Direct protein sequencing</keyword>
<keyword id="KW-1213">G-protein coupled receptor impairing toxin</keyword>
<keyword id="KW-0391">Immunity</keyword>
<keyword id="KW-0399">Innate immunity</keyword>
<keyword id="KW-0467">Mast cell degranulation</keyword>
<keyword id="KW-0472">Membrane</keyword>
<keyword id="KW-0964">Secreted</keyword>
<keyword id="KW-1052">Target cell membrane</keyword>
<keyword id="KW-1053">Target membrane</keyword>
<keyword id="KW-0800">Toxin</keyword>
<protein>
    <recommendedName>
        <fullName evidence="8">Crabrolin</fullName>
    </recommendedName>
</protein>
<name>CRBL_VESCR</name>
<organism>
    <name type="scientific">Vespa crabro</name>
    <name type="common">European hornet</name>
    <dbReference type="NCBI Taxonomy" id="7445"/>
    <lineage>
        <taxon>Eukaryota</taxon>
        <taxon>Metazoa</taxon>
        <taxon>Ecdysozoa</taxon>
        <taxon>Arthropoda</taxon>
        <taxon>Hexapoda</taxon>
        <taxon>Insecta</taxon>
        <taxon>Pterygota</taxon>
        <taxon>Neoptera</taxon>
        <taxon>Endopterygota</taxon>
        <taxon>Hymenoptera</taxon>
        <taxon>Apocrita</taxon>
        <taxon>Aculeata</taxon>
        <taxon>Vespoidea</taxon>
        <taxon>Vespidae</taxon>
        <taxon>Vespinae</taxon>
        <taxon>Vespa</taxon>
    </lineage>
</organism>
<comment type="function">
    <text evidence="1 2 3 6 7">Antimicrobial and mast cell degranulating peptide (PubMed:31487493, PubMed:6206053, PubMed:9273892). Shows low antimicrobial activity towards some Gram-negative bacteria (E.coli MIC=300 ug/ml, S.typhimurium MIC=300 ug/ml) and all Gram-positive bacteria tested (B.subtilis MIC=300 ug/ml, S.aureus MIC=300 ug/ml, E.faecalis MIC=150 ug/ml, and E.faecium MIC=75 ug/ml) (PubMed:31487493, PubMed:9273892). May act by permeabilizing membranes, since it permeabilizes liposomes composed by phosphatidylethanolamine(PE)/phosphatidylglycerol(PG) and cardiolipin(CL)/phosphatidylglycerol(PG), which mimic the membranes of Gram-negative and Gram-positive bacteria, respectively (PubMed:31487493). Causes hemolysis on rat and guinea pig erythrocytes (PubMed:6206053, PubMed:9273892). Its mast cell degranulation activity may be related to the activation of G-protein coupled receptors in mast cells as well as interaction with other proteins located in cell endosomal membranes in the mast cells (By similarity).</text>
</comment>
<comment type="subcellular location">
    <subcellularLocation>
        <location evidence="6">Secreted</location>
    </subcellularLocation>
    <subcellularLocation>
        <location evidence="10">Target cell membrane</location>
    </subcellularLocation>
    <text evidence="3">Assumes an amphipathic alpha-helical conformation in a membrane-like environment.</text>
</comment>
<comment type="tissue specificity">
    <text evidence="11">Expressed by the venom gland.</text>
</comment>
<comment type="miscellaneous">
    <text evidence="3 4">Negative results: does not interact with lipopolysaccharide (LPS) (PubMed:31487493, PubMed:32585759). Has no antibacterial activity towards some Gram-negative bacteria (P.aeruginosa, P.mirabilis, K.pneumoniae) (MIC&gt;600 ug/ml) (PubMed:31487493, PubMed:32585759).</text>
</comment>
<comment type="similarity">
    <text evidence="9">Belongs to the MCD family. Crabrolin subfamily.</text>
</comment>